<reference key="1">
    <citation type="journal article" date="2009" name="PLoS Biol.">
        <title>Lineage-specific biology revealed by a finished genome assembly of the mouse.</title>
        <authorList>
            <person name="Church D.M."/>
            <person name="Goodstadt L."/>
            <person name="Hillier L.W."/>
            <person name="Zody M.C."/>
            <person name="Goldstein S."/>
            <person name="She X."/>
            <person name="Bult C.J."/>
            <person name="Agarwala R."/>
            <person name="Cherry J.L."/>
            <person name="DiCuccio M."/>
            <person name="Hlavina W."/>
            <person name="Kapustin Y."/>
            <person name="Meric P."/>
            <person name="Maglott D."/>
            <person name="Birtle Z."/>
            <person name="Marques A.C."/>
            <person name="Graves T."/>
            <person name="Zhou S."/>
            <person name="Teague B."/>
            <person name="Potamousis K."/>
            <person name="Churas C."/>
            <person name="Place M."/>
            <person name="Herschleb J."/>
            <person name="Runnheim R."/>
            <person name="Forrest D."/>
            <person name="Amos-Landgraf J."/>
            <person name="Schwartz D.C."/>
            <person name="Cheng Z."/>
            <person name="Lindblad-Toh K."/>
            <person name="Eichler E.E."/>
            <person name="Ponting C.P."/>
        </authorList>
    </citation>
    <scope>NUCLEOTIDE SEQUENCE [LARGE SCALE GENOMIC DNA]</scope>
    <source>
        <strain>C57BL/6J</strain>
    </source>
</reference>
<reference key="2">
    <citation type="journal article" date="2010" name="Cell">
        <title>A tissue-specific atlas of mouse protein phosphorylation and expression.</title>
        <authorList>
            <person name="Huttlin E.L."/>
            <person name="Jedrychowski M.P."/>
            <person name="Elias J.E."/>
            <person name="Goswami T."/>
            <person name="Rad R."/>
            <person name="Beausoleil S.A."/>
            <person name="Villen J."/>
            <person name="Haas W."/>
            <person name="Sowa M.E."/>
            <person name="Gygi S.P."/>
        </authorList>
    </citation>
    <scope>IDENTIFICATION BY MASS SPECTROMETRY [LARGE SCALE ANALYSIS]</scope>
    <source>
        <tissue>Testis</tissue>
    </source>
</reference>
<organism>
    <name type="scientific">Mus musculus</name>
    <name type="common">Mouse</name>
    <dbReference type="NCBI Taxonomy" id="10090"/>
    <lineage>
        <taxon>Eukaryota</taxon>
        <taxon>Metazoa</taxon>
        <taxon>Chordata</taxon>
        <taxon>Craniata</taxon>
        <taxon>Vertebrata</taxon>
        <taxon>Euteleostomi</taxon>
        <taxon>Mammalia</taxon>
        <taxon>Eutheria</taxon>
        <taxon>Euarchontoglires</taxon>
        <taxon>Glires</taxon>
        <taxon>Rodentia</taxon>
        <taxon>Myomorpha</taxon>
        <taxon>Muroidea</taxon>
        <taxon>Muridae</taxon>
        <taxon>Murinae</taxon>
        <taxon>Mus</taxon>
        <taxon>Mus</taxon>
    </lineage>
</organism>
<protein>
    <recommendedName>
        <fullName>Maestro heat-like repeat-containing protein family member 2A</fullName>
    </recommendedName>
    <alternativeName>
        <fullName>HEAT repeat-containing protein 7B1</fullName>
    </alternativeName>
</protein>
<proteinExistence type="evidence at protein level"/>
<feature type="chain" id="PRO_0000395104" description="Maestro heat-like repeat-containing protein family member 2A">
    <location>
        <begin position="1"/>
        <end position="1679"/>
    </location>
</feature>
<feature type="repeat" description="HEAT 1">
    <location>
        <begin position="68"/>
        <end position="91"/>
    </location>
</feature>
<feature type="repeat" description="HEAT 2">
    <location>
        <begin position="92"/>
        <end position="128"/>
    </location>
</feature>
<feature type="repeat" description="HEAT 3">
    <location>
        <begin position="190"/>
        <end position="229"/>
    </location>
</feature>
<feature type="repeat" description="HEAT 4">
    <location>
        <begin position="293"/>
        <end position="313"/>
    </location>
</feature>
<feature type="repeat" description="HEAT 5">
    <location>
        <begin position="314"/>
        <end position="350"/>
    </location>
</feature>
<feature type="repeat" description="HEAT 6">
    <location>
        <begin position="380"/>
        <end position="417"/>
    </location>
</feature>
<feature type="repeat" description="HEAT 7">
    <location>
        <begin position="422"/>
        <end position="459"/>
    </location>
</feature>
<feature type="repeat" description="HEAT 8">
    <location>
        <begin position="571"/>
        <end position="610"/>
    </location>
</feature>
<feature type="repeat" description="HEAT 9">
    <location>
        <begin position="614"/>
        <end position="654"/>
    </location>
</feature>
<feature type="repeat" description="HEAT 10">
    <location>
        <begin position="737"/>
        <end position="774"/>
    </location>
</feature>
<feature type="repeat" description="HEAT 11">
    <location>
        <begin position="848"/>
        <end position="887"/>
    </location>
</feature>
<feature type="repeat" description="HEAT 12">
    <location>
        <begin position="991"/>
        <end position="1028"/>
    </location>
</feature>
<feature type="repeat" description="HEAT 13">
    <location>
        <begin position="1219"/>
        <end position="1261"/>
    </location>
</feature>
<feature type="repeat" description="HEAT 14">
    <location>
        <begin position="1387"/>
        <end position="1425"/>
    </location>
</feature>
<feature type="repeat" description="HEAT 15">
    <location>
        <begin position="1632"/>
        <end position="1669"/>
    </location>
</feature>
<accession>D3Z750</accession>
<dbReference type="EMBL" id="AC087780">
    <property type="status" value="NOT_ANNOTATED_CDS"/>
    <property type="molecule type" value="Genomic_DNA"/>
</dbReference>
<dbReference type="FunCoup" id="D3Z750">
    <property type="interactions" value="189"/>
</dbReference>
<dbReference type="STRING" id="10090.ENSMUSP00000108755"/>
<dbReference type="GlyGen" id="D3Z750">
    <property type="glycosylation" value="2 sites, 1 O-linked glycan (1 site)"/>
</dbReference>
<dbReference type="iPTMnet" id="D3Z750"/>
<dbReference type="PhosphoSitePlus" id="D3Z750"/>
<dbReference type="PaxDb" id="10090-ENSMUSP00000130508"/>
<dbReference type="PeptideAtlas" id="D3Z750"/>
<dbReference type="ProteomicsDB" id="290059"/>
<dbReference type="Antibodypedia" id="63003">
    <property type="antibodies" value="4 antibodies from 4 providers"/>
</dbReference>
<dbReference type="MGI" id="MGI:3705228">
    <property type="gene designation" value="Mroh2a"/>
</dbReference>
<dbReference type="VEuPathDB" id="HostDB:ENSMUSG00000079429"/>
<dbReference type="eggNOG" id="KOG2032">
    <property type="taxonomic scope" value="Eukaryota"/>
</dbReference>
<dbReference type="InParanoid" id="D3Z750"/>
<dbReference type="OrthoDB" id="1884734at2759"/>
<dbReference type="PhylomeDB" id="D3Z750"/>
<dbReference type="TreeFam" id="TF315201"/>
<dbReference type="PRO" id="PR:D3Z750"/>
<dbReference type="Proteomes" id="UP000000589">
    <property type="component" value="Chromosome 1"/>
</dbReference>
<dbReference type="RNAct" id="D3Z750">
    <property type="molecule type" value="protein"/>
</dbReference>
<dbReference type="Bgee" id="ENSMUSG00000079429">
    <property type="expression patterns" value="Expressed in spermatocyte and 100 other cell types or tissues"/>
</dbReference>
<dbReference type="ExpressionAtlas" id="D3Z750">
    <property type="expression patterns" value="baseline and differential"/>
</dbReference>
<dbReference type="Gene3D" id="1.25.10.10">
    <property type="entry name" value="Leucine-rich Repeat Variant"/>
    <property type="match status" value="2"/>
</dbReference>
<dbReference type="InterPro" id="IPR011989">
    <property type="entry name" value="ARM-like"/>
</dbReference>
<dbReference type="InterPro" id="IPR016024">
    <property type="entry name" value="ARM-type_fold"/>
</dbReference>
<dbReference type="InterPro" id="IPR055406">
    <property type="entry name" value="HEAT_Maestro"/>
</dbReference>
<dbReference type="InterPro" id="IPR055408">
    <property type="entry name" value="HEAT_MROH2B-like"/>
</dbReference>
<dbReference type="InterPro" id="IPR048465">
    <property type="entry name" value="Maestro-like_HEAT"/>
</dbReference>
<dbReference type="InterPro" id="IPR045206">
    <property type="entry name" value="Maestro_heat-like_prot"/>
</dbReference>
<dbReference type="InterPro" id="IPR056282">
    <property type="entry name" value="MROH2B-like_N_HEAT"/>
</dbReference>
<dbReference type="PANTHER" id="PTHR23120:SF14">
    <property type="entry name" value="MAESTRO HEAT-LIKE REPEAT-CONTAINING PROTEIN FAMILY MEMBER 2A"/>
    <property type="match status" value="1"/>
</dbReference>
<dbReference type="PANTHER" id="PTHR23120">
    <property type="entry name" value="MAESTRO-RELATED HEAT DOMAIN-CONTAINING"/>
    <property type="match status" value="1"/>
</dbReference>
<dbReference type="Pfam" id="PF21047">
    <property type="entry name" value="HEAT_Maestro"/>
    <property type="match status" value="1"/>
</dbReference>
<dbReference type="Pfam" id="PF23210">
    <property type="entry name" value="HEAT_Maestro_2"/>
    <property type="match status" value="1"/>
</dbReference>
<dbReference type="Pfam" id="PF23221">
    <property type="entry name" value="HEAT_MROH2B_1st"/>
    <property type="match status" value="1"/>
</dbReference>
<dbReference type="Pfam" id="PF23227">
    <property type="entry name" value="HEAT_MROH2B_C"/>
    <property type="match status" value="1"/>
</dbReference>
<dbReference type="SUPFAM" id="SSF48371">
    <property type="entry name" value="ARM repeat"/>
    <property type="match status" value="2"/>
</dbReference>
<name>MRO2A_MOUSE</name>
<keyword id="KW-1185">Reference proteome</keyword>
<keyword id="KW-0677">Repeat</keyword>
<gene>
    <name type="primary">Mroh2a</name>
    <name type="synonym">Heatr7b1</name>
</gene>
<sequence>MKEATELNEDMLEEAEHLALLEPEDDGTFFQVTNLLNIMDSESAKTDTTGPGLDMRKTLASVIITEKATTDPCVVMNALIRCLQMPEISTQRKMNIYNIMQEIIQQEGEMEEHCIQRLVAIASKQMRDITEAEDFETAEVASETLVALSRNHFSLVMYELQHHLKPLNLTDEFVIVTLAKLANGNVFEFMPYMGITLATIFTMLRLANEAKMRQVICSAMETFCETVQFYLRHLEDSLYPVMTEDQFAVKLFPMYRYFVTVWLRHQDLEVKLGVIKSLRPMLSLLLPNDDLREQVYDYIPLLLAEFQGTGHWPLFPSLLQVLRQILEASVTTNTPIPPMLLHPIFTELHVQVCSKAPAQQQFSSQNLMEIVHCFIALARSYPKELMKFFFSQVEMSKEAVRVGTLALIRAVVSADDPKINIKTIYLAIRVVKNTLSDTRSKVRMAILRIIGQLVLSGFQEKIKGWGLKYVSVQLTLSTYKLTNRRECFYQRDLEEKMVHKVTMDTVKIITSSISGMTNEFWVRLLCYIMETDYTEALTPICISLTNLAENQIHGKDTEAGIAGKSKHVDLPAPQKLLARLLVLMSSPYKGEGRGIAMLNLLRTLSQSIAPSMADMWEQEIPLLVQYLEEHTEFTWNQKTWEDMLIQFLRNSLKKTRGTSWSLRLSKELNNQIETFDSPSLEKGFLYRALGFTLGMGLEADRVEVLLLELLYKTDYSNDFDREGVILCFGLCARGQVKTVLNVLQDFEERIQESEQSWQIGAWRKDHPWRRETVKSALMVMYSCVSSYCHPQMLLTHVDSPITSKIIHHYSSSCQDISLKMAFMKSVVQVTNAIKSIQDPEDFQFAHKSALTGLIVVIIKAEPPDHLVSPVRSMAMDALSQLSTMKPFYSPEESTELMDISIHTVISLQPPGEDNESVKTLYANTMSSLKQLMEGLLQRQLDPKGLQDTVHLLEKWILSEKEWEREKAMALHLHLMQIYVQSIGVCIPLKLGQFGVLVGLIAPCTCDAHRRTRLASINVLSSLLDLHVSQTCSLWGTSKEQELQKCKEDLQDTDMNKISSASSRVAKVVCPEFNCDEVVSLIQKLCENIGAMDLQHDRAAVTWIGIFLQMRVKELEDKVAEILGAILVHLPVVDHPEVRRHLIEGILLLAHYHQETVLTSLLRQPLPMESHLTEVWLAVAENVPFARTMLHGLLGRLQSRFTAKINATSKADIWRLAAVDPLMTLCTIQLLMEKMDQDDKFPDLFPDLLYTFLLQLGSSHGPEAASPVLKTWRLVHTGPLPQEMTLQRCSRSRITIKSMQLLVKRINREPLEQALEEQSVWSLLENGGTFLEGVSLMARLCMQNMENYMQRLAELVLTGMGSEILSCCISSTAICVEFMSDPVLHQEKLLRPVVLMLEKGAGQDKDETLQVLSLRALGNMALGAPRKVKQYRKLLLEKCLGSLQGQVSSSAMAEGMEALTKVLAELREGDIGSSFEAISKQCRAFFDNESELLRLKAFVLFGKLTKVVGISKKHFFKGEVKRGWVSLLLHCQDPCPSVAQACVATMFQCVHFWGWKSLESSFGHSNDSINEQMTVFQTNMCSVLAQKKPAVLCGFLLETTVFMKNNLSRIRIAACNLAGIIMKQLSAHYLKKMDLVGLRNSLQDLQLDSDAGVRRAALETLKVLDSCNQHWLLASPRGLP</sequence>